<proteinExistence type="predicted"/>
<sequence length="137" mass="16141">MMIIFRYLIIIILSVYMTGCTNNNLKKEDIPEDMFAIIYGSDSIKKYEHGQMELTKNINSGCIEALVFLSEEDPEKYSDYINDYHKIAEGYRFLDDNRTFMNKDSIELLVRGLNVKKDVLCSRVKFESFQHLKNKFQ</sequence>
<name>YUAC_ECOLI</name>
<organism>
    <name type="scientific">Escherichia coli (strain K12)</name>
    <dbReference type="NCBI Taxonomy" id="83333"/>
    <lineage>
        <taxon>Bacteria</taxon>
        <taxon>Pseudomonadati</taxon>
        <taxon>Pseudomonadota</taxon>
        <taxon>Gammaproteobacteria</taxon>
        <taxon>Enterobacterales</taxon>
        <taxon>Enterobacteriaceae</taxon>
        <taxon>Escherichia</taxon>
    </lineage>
</organism>
<feature type="chain" id="PRO_0000267215" description="Uncharacterized protein YuaC">
    <location>
        <begin position="1"/>
        <end position="137"/>
    </location>
</feature>
<accession>Q9JMT7</accession>
<gene>
    <name type="primary">yuaC</name>
    <name type="synonym">ybbA</name>
    <name type="ordered locus">ECOK12F012</name>
</gene>
<dbReference type="EMBL" id="AP001918">
    <property type="protein sequence ID" value="BAA97882.1"/>
    <property type="molecule type" value="Genomic_DNA"/>
</dbReference>
<dbReference type="RefSeq" id="NP_061391.1">
    <property type="nucleotide sequence ID" value="NC_002483.1"/>
</dbReference>
<dbReference type="RefSeq" id="WP_001351580.1">
    <property type="nucleotide sequence ID" value="NZ_JACEFS010000062.1"/>
</dbReference>
<dbReference type="KEGG" id="ecoc:C3026_24160"/>
<dbReference type="PATRIC" id="fig|83333.107.peg.591"/>
<dbReference type="OrthoDB" id="6631594at2"/>
<geneLocation type="plasmid">
    <name>F</name>
</geneLocation>
<keyword id="KW-0614">Plasmid</keyword>
<protein>
    <recommendedName>
        <fullName>Uncharacterized protein YuaC</fullName>
    </recommendedName>
</protein>
<reference key="1">
    <citation type="submission" date="2000-04" db="EMBL/GenBank/DDBJ databases">
        <title>Complete nucleotide sequence of the F plasmid: its implications for organization and diversification of plasmid genomes.</title>
        <authorList>
            <person name="Shimizu H."/>
            <person name="Saitoh Y."/>
            <person name="Suda Y."/>
            <person name="Uehara K."/>
            <person name="Sampei G."/>
            <person name="Mizobuchi K."/>
        </authorList>
    </citation>
    <scope>NUCLEOTIDE SEQUENCE [LARGE SCALE GENOMIC DNA]</scope>
    <source>
        <strain>K12 / CR63</strain>
    </source>
</reference>